<protein>
    <recommendedName>
        <fullName evidence="1">Bifunctional protein GlmU</fullName>
    </recommendedName>
    <domain>
        <recommendedName>
            <fullName evidence="1">UDP-N-acetylglucosamine pyrophosphorylase</fullName>
            <ecNumber evidence="1">2.7.7.23</ecNumber>
        </recommendedName>
        <alternativeName>
            <fullName evidence="1">N-acetylglucosamine-1-phosphate uridyltransferase</fullName>
        </alternativeName>
    </domain>
    <domain>
        <recommendedName>
            <fullName evidence="1">Glucosamine-1-phosphate N-acetyltransferase</fullName>
            <ecNumber evidence="1">2.3.1.157</ecNumber>
        </recommendedName>
    </domain>
</protein>
<gene>
    <name evidence="1" type="primary">glmU</name>
    <name type="ordered locus">HNE_0705</name>
</gene>
<sequence length="461" mass="48223">MTDTRKQRAAVILAAGKGTRMKSPLPKVMHAVGGRPMMDWSIALARQVGAERIVAVVHPSQDVLIAHLGKHHPDVAIAYQDPPQGTGHAVRCAEEALRGFEGDLAVLYGDSPLVPAATIEDLFGTLSDKTGLGVLGFEAEDPGLYGRLITGEDGSLEAIVEAREATPFQLRVRLCNSGVMAGRAADMFRLLAKVTNSNAKGEYYLTDLVGLARAEGIRCAVAVSGEDDLIGCDSKADLAEAEAIFQQKRRRALMEAGVTMVAPETVFLSHDTQIGADAVIEPNVVFGPGVKVAGGAQIRAFSHLEGAVVGEGCSVGPYARLRPGTVLAANVHIGNFVETKNTAMGEGAKANHLAYLGDGTIGAGANIGAGTIFCNYDGFLKHQTDVGEGAFVGSNSALVAPVRIGDGAYIGSGSVITKDVPDDALAVGRGQQITREGWARNYRAKKAAEKAARTTDQNKKG</sequence>
<comment type="function">
    <text evidence="1">Catalyzes the last two sequential reactions in the de novo biosynthetic pathway for UDP-N-acetylglucosamine (UDP-GlcNAc). The C-terminal domain catalyzes the transfer of acetyl group from acetyl coenzyme A to glucosamine-1-phosphate (GlcN-1-P) to produce N-acetylglucosamine-1-phosphate (GlcNAc-1-P), which is converted into UDP-GlcNAc by the transfer of uridine 5-monophosphate (from uridine 5-triphosphate), a reaction catalyzed by the N-terminal domain.</text>
</comment>
<comment type="catalytic activity">
    <reaction evidence="1">
        <text>alpha-D-glucosamine 1-phosphate + acetyl-CoA = N-acetyl-alpha-D-glucosamine 1-phosphate + CoA + H(+)</text>
        <dbReference type="Rhea" id="RHEA:13725"/>
        <dbReference type="ChEBI" id="CHEBI:15378"/>
        <dbReference type="ChEBI" id="CHEBI:57287"/>
        <dbReference type="ChEBI" id="CHEBI:57288"/>
        <dbReference type="ChEBI" id="CHEBI:57776"/>
        <dbReference type="ChEBI" id="CHEBI:58516"/>
        <dbReference type="EC" id="2.3.1.157"/>
    </reaction>
</comment>
<comment type="catalytic activity">
    <reaction evidence="1">
        <text>N-acetyl-alpha-D-glucosamine 1-phosphate + UTP + H(+) = UDP-N-acetyl-alpha-D-glucosamine + diphosphate</text>
        <dbReference type="Rhea" id="RHEA:13509"/>
        <dbReference type="ChEBI" id="CHEBI:15378"/>
        <dbReference type="ChEBI" id="CHEBI:33019"/>
        <dbReference type="ChEBI" id="CHEBI:46398"/>
        <dbReference type="ChEBI" id="CHEBI:57705"/>
        <dbReference type="ChEBI" id="CHEBI:57776"/>
        <dbReference type="EC" id="2.7.7.23"/>
    </reaction>
</comment>
<comment type="cofactor">
    <cofactor evidence="1">
        <name>Mg(2+)</name>
        <dbReference type="ChEBI" id="CHEBI:18420"/>
    </cofactor>
    <text evidence="1">Binds 1 Mg(2+) ion per subunit.</text>
</comment>
<comment type="pathway">
    <text evidence="1">Nucleotide-sugar biosynthesis; UDP-N-acetyl-alpha-D-glucosamine biosynthesis; N-acetyl-alpha-D-glucosamine 1-phosphate from alpha-D-glucosamine 6-phosphate (route II): step 2/2.</text>
</comment>
<comment type="pathway">
    <text evidence="1">Nucleotide-sugar biosynthesis; UDP-N-acetyl-alpha-D-glucosamine biosynthesis; UDP-N-acetyl-alpha-D-glucosamine from N-acetyl-alpha-D-glucosamine 1-phosphate: step 1/1.</text>
</comment>
<comment type="pathway">
    <text evidence="1">Bacterial outer membrane biogenesis; LPS lipid A biosynthesis.</text>
</comment>
<comment type="subunit">
    <text evidence="1">Homotrimer.</text>
</comment>
<comment type="subcellular location">
    <subcellularLocation>
        <location evidence="1">Cytoplasm</location>
    </subcellularLocation>
</comment>
<comment type="similarity">
    <text evidence="1">In the N-terminal section; belongs to the N-acetylglucosamine-1-phosphate uridyltransferase family.</text>
</comment>
<comment type="similarity">
    <text evidence="1">In the C-terminal section; belongs to the transferase hexapeptide repeat family.</text>
</comment>
<name>GLMU_HYPNA</name>
<dbReference type="EC" id="2.7.7.23" evidence="1"/>
<dbReference type="EC" id="2.3.1.157" evidence="1"/>
<dbReference type="EMBL" id="CP000158">
    <property type="protein sequence ID" value="ABI76014.1"/>
    <property type="molecule type" value="Genomic_DNA"/>
</dbReference>
<dbReference type="RefSeq" id="WP_011645733.1">
    <property type="nucleotide sequence ID" value="NC_008358.1"/>
</dbReference>
<dbReference type="SMR" id="Q0C4B0"/>
<dbReference type="STRING" id="228405.HNE_0705"/>
<dbReference type="KEGG" id="hne:HNE_0705"/>
<dbReference type="eggNOG" id="COG1207">
    <property type="taxonomic scope" value="Bacteria"/>
</dbReference>
<dbReference type="HOGENOM" id="CLU_029499_15_2_5"/>
<dbReference type="UniPathway" id="UPA00113">
    <property type="reaction ID" value="UER00532"/>
</dbReference>
<dbReference type="UniPathway" id="UPA00113">
    <property type="reaction ID" value="UER00533"/>
</dbReference>
<dbReference type="UniPathway" id="UPA00973"/>
<dbReference type="Proteomes" id="UP000001959">
    <property type="component" value="Chromosome"/>
</dbReference>
<dbReference type="GO" id="GO:0005737">
    <property type="term" value="C:cytoplasm"/>
    <property type="evidence" value="ECO:0007669"/>
    <property type="project" value="UniProtKB-SubCell"/>
</dbReference>
<dbReference type="GO" id="GO:0016020">
    <property type="term" value="C:membrane"/>
    <property type="evidence" value="ECO:0007669"/>
    <property type="project" value="GOC"/>
</dbReference>
<dbReference type="GO" id="GO:0019134">
    <property type="term" value="F:glucosamine-1-phosphate N-acetyltransferase activity"/>
    <property type="evidence" value="ECO:0007669"/>
    <property type="project" value="UniProtKB-UniRule"/>
</dbReference>
<dbReference type="GO" id="GO:0000287">
    <property type="term" value="F:magnesium ion binding"/>
    <property type="evidence" value="ECO:0007669"/>
    <property type="project" value="UniProtKB-UniRule"/>
</dbReference>
<dbReference type="GO" id="GO:0003977">
    <property type="term" value="F:UDP-N-acetylglucosamine diphosphorylase activity"/>
    <property type="evidence" value="ECO:0007669"/>
    <property type="project" value="UniProtKB-UniRule"/>
</dbReference>
<dbReference type="GO" id="GO:0000902">
    <property type="term" value="P:cell morphogenesis"/>
    <property type="evidence" value="ECO:0007669"/>
    <property type="project" value="UniProtKB-UniRule"/>
</dbReference>
<dbReference type="GO" id="GO:0071555">
    <property type="term" value="P:cell wall organization"/>
    <property type="evidence" value="ECO:0007669"/>
    <property type="project" value="UniProtKB-KW"/>
</dbReference>
<dbReference type="GO" id="GO:0009245">
    <property type="term" value="P:lipid A biosynthetic process"/>
    <property type="evidence" value="ECO:0007669"/>
    <property type="project" value="UniProtKB-UniRule"/>
</dbReference>
<dbReference type="GO" id="GO:0009252">
    <property type="term" value="P:peptidoglycan biosynthetic process"/>
    <property type="evidence" value="ECO:0007669"/>
    <property type="project" value="UniProtKB-UniRule"/>
</dbReference>
<dbReference type="GO" id="GO:0008360">
    <property type="term" value="P:regulation of cell shape"/>
    <property type="evidence" value="ECO:0007669"/>
    <property type="project" value="UniProtKB-KW"/>
</dbReference>
<dbReference type="GO" id="GO:0006048">
    <property type="term" value="P:UDP-N-acetylglucosamine biosynthetic process"/>
    <property type="evidence" value="ECO:0007669"/>
    <property type="project" value="UniProtKB-UniPathway"/>
</dbReference>
<dbReference type="CDD" id="cd02540">
    <property type="entry name" value="GT2_GlmU_N_bac"/>
    <property type="match status" value="1"/>
</dbReference>
<dbReference type="CDD" id="cd03353">
    <property type="entry name" value="LbH_GlmU_C"/>
    <property type="match status" value="1"/>
</dbReference>
<dbReference type="Gene3D" id="2.160.10.10">
    <property type="entry name" value="Hexapeptide repeat proteins"/>
    <property type="match status" value="1"/>
</dbReference>
<dbReference type="Gene3D" id="3.90.550.10">
    <property type="entry name" value="Spore Coat Polysaccharide Biosynthesis Protein SpsA, Chain A"/>
    <property type="match status" value="1"/>
</dbReference>
<dbReference type="HAMAP" id="MF_01631">
    <property type="entry name" value="GlmU"/>
    <property type="match status" value="1"/>
</dbReference>
<dbReference type="InterPro" id="IPR005882">
    <property type="entry name" value="Bifunctional_GlmU"/>
</dbReference>
<dbReference type="InterPro" id="IPR050065">
    <property type="entry name" value="GlmU-like"/>
</dbReference>
<dbReference type="InterPro" id="IPR038009">
    <property type="entry name" value="GlmU_C_LbH"/>
</dbReference>
<dbReference type="InterPro" id="IPR001451">
    <property type="entry name" value="Hexapep"/>
</dbReference>
<dbReference type="InterPro" id="IPR018357">
    <property type="entry name" value="Hexapep_transf_CS"/>
</dbReference>
<dbReference type="InterPro" id="IPR025877">
    <property type="entry name" value="MobA-like_NTP_Trfase"/>
</dbReference>
<dbReference type="InterPro" id="IPR029044">
    <property type="entry name" value="Nucleotide-diphossugar_trans"/>
</dbReference>
<dbReference type="InterPro" id="IPR011004">
    <property type="entry name" value="Trimer_LpxA-like_sf"/>
</dbReference>
<dbReference type="NCBIfam" id="TIGR01173">
    <property type="entry name" value="glmU"/>
    <property type="match status" value="1"/>
</dbReference>
<dbReference type="NCBIfam" id="NF010933">
    <property type="entry name" value="PRK14353.1"/>
    <property type="match status" value="1"/>
</dbReference>
<dbReference type="PANTHER" id="PTHR43584:SF3">
    <property type="entry name" value="BIFUNCTIONAL PROTEIN GLMU"/>
    <property type="match status" value="1"/>
</dbReference>
<dbReference type="PANTHER" id="PTHR43584">
    <property type="entry name" value="NUCLEOTIDYL TRANSFERASE"/>
    <property type="match status" value="1"/>
</dbReference>
<dbReference type="Pfam" id="PF00132">
    <property type="entry name" value="Hexapep"/>
    <property type="match status" value="2"/>
</dbReference>
<dbReference type="Pfam" id="PF12804">
    <property type="entry name" value="NTP_transf_3"/>
    <property type="match status" value="1"/>
</dbReference>
<dbReference type="SUPFAM" id="SSF53448">
    <property type="entry name" value="Nucleotide-diphospho-sugar transferases"/>
    <property type="match status" value="1"/>
</dbReference>
<dbReference type="SUPFAM" id="SSF51161">
    <property type="entry name" value="Trimeric LpxA-like enzymes"/>
    <property type="match status" value="1"/>
</dbReference>
<dbReference type="PROSITE" id="PS00101">
    <property type="entry name" value="HEXAPEP_TRANSFERASES"/>
    <property type="match status" value="1"/>
</dbReference>
<feature type="chain" id="PRO_0000263135" description="Bifunctional protein GlmU">
    <location>
        <begin position="1"/>
        <end position="461"/>
    </location>
</feature>
<feature type="region of interest" description="Pyrophosphorylase" evidence="1">
    <location>
        <begin position="1"/>
        <end position="235"/>
    </location>
</feature>
<feature type="region of interest" description="Linker" evidence="1">
    <location>
        <begin position="236"/>
        <end position="256"/>
    </location>
</feature>
<feature type="region of interest" description="N-acetyltransferase" evidence="1">
    <location>
        <begin position="257"/>
        <end position="461"/>
    </location>
</feature>
<feature type="active site" description="Proton acceptor" evidence="1">
    <location>
        <position position="352"/>
    </location>
</feature>
<feature type="binding site" evidence="1">
    <location>
        <begin position="13"/>
        <end position="16"/>
    </location>
    <ligand>
        <name>UDP-N-acetyl-alpha-D-glucosamine</name>
        <dbReference type="ChEBI" id="CHEBI:57705"/>
    </ligand>
</feature>
<feature type="binding site" evidence="1">
    <location>
        <position position="27"/>
    </location>
    <ligand>
        <name>UDP-N-acetyl-alpha-D-glucosamine</name>
        <dbReference type="ChEBI" id="CHEBI:57705"/>
    </ligand>
</feature>
<feature type="binding site" evidence="1">
    <location>
        <position position="80"/>
    </location>
    <ligand>
        <name>UDP-N-acetyl-alpha-D-glucosamine</name>
        <dbReference type="ChEBI" id="CHEBI:57705"/>
    </ligand>
</feature>
<feature type="binding site" evidence="1">
    <location>
        <begin position="85"/>
        <end position="86"/>
    </location>
    <ligand>
        <name>UDP-N-acetyl-alpha-D-glucosamine</name>
        <dbReference type="ChEBI" id="CHEBI:57705"/>
    </ligand>
</feature>
<feature type="binding site" evidence="1">
    <location>
        <begin position="108"/>
        <end position="110"/>
    </location>
    <ligand>
        <name>UDP-N-acetyl-alpha-D-glucosamine</name>
        <dbReference type="ChEBI" id="CHEBI:57705"/>
    </ligand>
</feature>
<feature type="binding site" evidence="1">
    <location>
        <position position="110"/>
    </location>
    <ligand>
        <name>Mg(2+)</name>
        <dbReference type="ChEBI" id="CHEBI:18420"/>
    </ligand>
</feature>
<feature type="binding site" evidence="1">
    <location>
        <position position="146"/>
    </location>
    <ligand>
        <name>UDP-N-acetyl-alpha-D-glucosamine</name>
        <dbReference type="ChEBI" id="CHEBI:57705"/>
    </ligand>
</feature>
<feature type="binding site" evidence="1">
    <location>
        <position position="161"/>
    </location>
    <ligand>
        <name>UDP-N-acetyl-alpha-D-glucosamine</name>
        <dbReference type="ChEBI" id="CHEBI:57705"/>
    </ligand>
</feature>
<feature type="binding site" evidence="1">
    <location>
        <position position="176"/>
    </location>
    <ligand>
        <name>UDP-N-acetyl-alpha-D-glucosamine</name>
        <dbReference type="ChEBI" id="CHEBI:57705"/>
    </ligand>
</feature>
<feature type="binding site" evidence="1">
    <location>
        <position position="322"/>
    </location>
    <ligand>
        <name>UDP-N-acetyl-alpha-D-glucosamine</name>
        <dbReference type="ChEBI" id="CHEBI:57705"/>
    </ligand>
</feature>
<feature type="binding site" evidence="1">
    <location>
        <position position="340"/>
    </location>
    <ligand>
        <name>UDP-N-acetyl-alpha-D-glucosamine</name>
        <dbReference type="ChEBI" id="CHEBI:57705"/>
    </ligand>
</feature>
<feature type="binding site" evidence="1">
    <location>
        <position position="355"/>
    </location>
    <ligand>
        <name>UDP-N-acetyl-alpha-D-glucosamine</name>
        <dbReference type="ChEBI" id="CHEBI:57705"/>
    </ligand>
</feature>
<feature type="binding site" evidence="1">
    <location>
        <position position="366"/>
    </location>
    <ligand>
        <name>UDP-N-acetyl-alpha-D-glucosamine</name>
        <dbReference type="ChEBI" id="CHEBI:57705"/>
    </ligand>
</feature>
<feature type="binding site" evidence="1">
    <location>
        <position position="369"/>
    </location>
    <ligand>
        <name>acetyl-CoA</name>
        <dbReference type="ChEBI" id="CHEBI:57288"/>
    </ligand>
</feature>
<feature type="binding site" evidence="1">
    <location>
        <begin position="375"/>
        <end position="376"/>
    </location>
    <ligand>
        <name>acetyl-CoA</name>
        <dbReference type="ChEBI" id="CHEBI:57288"/>
    </ligand>
</feature>
<feature type="binding site" evidence="1">
    <location>
        <position position="394"/>
    </location>
    <ligand>
        <name>acetyl-CoA</name>
        <dbReference type="ChEBI" id="CHEBI:57288"/>
    </ligand>
</feature>
<feature type="binding site" evidence="1">
    <location>
        <position position="412"/>
    </location>
    <ligand>
        <name>acetyl-CoA</name>
        <dbReference type="ChEBI" id="CHEBI:57288"/>
    </ligand>
</feature>
<feature type="binding site" evidence="1">
    <location>
        <position position="429"/>
    </location>
    <ligand>
        <name>acetyl-CoA</name>
        <dbReference type="ChEBI" id="CHEBI:57288"/>
    </ligand>
</feature>
<reference key="1">
    <citation type="journal article" date="2006" name="J. Bacteriol.">
        <title>Comparative genomic evidence for a close relationship between the dimorphic prosthecate bacteria Hyphomonas neptunium and Caulobacter crescentus.</title>
        <authorList>
            <person name="Badger J.H."/>
            <person name="Hoover T.R."/>
            <person name="Brun Y.V."/>
            <person name="Weiner R.M."/>
            <person name="Laub M.T."/>
            <person name="Alexandre G."/>
            <person name="Mrazek J."/>
            <person name="Ren Q."/>
            <person name="Paulsen I.T."/>
            <person name="Nelson K.E."/>
            <person name="Khouri H.M."/>
            <person name="Radune D."/>
            <person name="Sosa J."/>
            <person name="Dodson R.J."/>
            <person name="Sullivan S.A."/>
            <person name="Rosovitz M.J."/>
            <person name="Madupu R."/>
            <person name="Brinkac L.M."/>
            <person name="Durkin A.S."/>
            <person name="Daugherty S.C."/>
            <person name="Kothari S.P."/>
            <person name="Giglio M.G."/>
            <person name="Zhou L."/>
            <person name="Haft D.H."/>
            <person name="Selengut J.D."/>
            <person name="Davidsen T.M."/>
            <person name="Yang Q."/>
            <person name="Zafar N."/>
            <person name="Ward N.L."/>
        </authorList>
    </citation>
    <scope>NUCLEOTIDE SEQUENCE [LARGE SCALE GENOMIC DNA]</scope>
    <source>
        <strain>ATCC 15444</strain>
    </source>
</reference>
<proteinExistence type="inferred from homology"/>
<organism>
    <name type="scientific">Hyphomonas neptunium (strain ATCC 15444)</name>
    <dbReference type="NCBI Taxonomy" id="228405"/>
    <lineage>
        <taxon>Bacteria</taxon>
        <taxon>Pseudomonadati</taxon>
        <taxon>Pseudomonadota</taxon>
        <taxon>Alphaproteobacteria</taxon>
        <taxon>Hyphomonadales</taxon>
        <taxon>Hyphomonadaceae</taxon>
        <taxon>Hyphomonas</taxon>
    </lineage>
</organism>
<accession>Q0C4B0</accession>
<keyword id="KW-0012">Acyltransferase</keyword>
<keyword id="KW-0133">Cell shape</keyword>
<keyword id="KW-0961">Cell wall biogenesis/degradation</keyword>
<keyword id="KW-0963">Cytoplasm</keyword>
<keyword id="KW-0460">Magnesium</keyword>
<keyword id="KW-0479">Metal-binding</keyword>
<keyword id="KW-0511">Multifunctional enzyme</keyword>
<keyword id="KW-0548">Nucleotidyltransferase</keyword>
<keyword id="KW-0573">Peptidoglycan synthesis</keyword>
<keyword id="KW-1185">Reference proteome</keyword>
<keyword id="KW-0677">Repeat</keyword>
<keyword id="KW-0808">Transferase</keyword>
<evidence type="ECO:0000255" key="1">
    <source>
        <dbReference type="HAMAP-Rule" id="MF_01631"/>
    </source>
</evidence>